<organism>
    <name type="scientific">Synechocystis sp. (strain ATCC 27184 / PCC 6803 / Kazusa)</name>
    <dbReference type="NCBI Taxonomy" id="1111708"/>
    <lineage>
        <taxon>Bacteria</taxon>
        <taxon>Bacillati</taxon>
        <taxon>Cyanobacteriota</taxon>
        <taxon>Cyanophyceae</taxon>
        <taxon>Synechococcales</taxon>
        <taxon>Merismopediaceae</taxon>
        <taxon>Synechocystis</taxon>
    </lineage>
</organism>
<comment type="function">
    <text evidence="1">Catalyzes the reduction of the macrocycle of cobalt-precorrin-6A to cobalt-precorrin-6B.</text>
</comment>
<comment type="catalytic activity">
    <reaction>
        <text>Co-precorrin-6B + NAD(+) = Co-precorrin-6A + NADH + H(+)</text>
        <dbReference type="Rhea" id="RHEA:15625"/>
        <dbReference type="ChEBI" id="CHEBI:15378"/>
        <dbReference type="ChEBI" id="CHEBI:57540"/>
        <dbReference type="ChEBI" id="CHEBI:57945"/>
        <dbReference type="ChEBI" id="CHEBI:60064"/>
        <dbReference type="ChEBI" id="CHEBI:72780"/>
        <dbReference type="EC" id="1.3.1.106"/>
    </reaction>
</comment>
<comment type="pathway">
    <text>Cofactor biosynthesis; adenosylcobalamin biosynthesis; cob(II)yrinate a,c-diamide from sirohydrochlorin (anaerobic route): step 7/10.</text>
</comment>
<comment type="similarity">
    <text evidence="2">Belongs to the precorrin-6x reductase family.</text>
</comment>
<protein>
    <recommendedName>
        <fullName>Cobalt-precorrin-6A reductase</fullName>
        <ecNumber>1.3.1.106</ecNumber>
    </recommendedName>
</protein>
<dbReference type="EC" id="1.3.1.106"/>
<dbReference type="EMBL" id="BA000022">
    <property type="protein sequence ID" value="BAA16718.1"/>
    <property type="molecule type" value="Genomic_DNA"/>
</dbReference>
<dbReference type="PIR" id="S74566">
    <property type="entry name" value="S74566"/>
</dbReference>
<dbReference type="SMR" id="P72711"/>
<dbReference type="IntAct" id="P72711">
    <property type="interactions" value="2"/>
</dbReference>
<dbReference type="STRING" id="1148.gene:10497573"/>
<dbReference type="PaxDb" id="1148-1651791"/>
<dbReference type="EnsemblBacteria" id="BAA16718">
    <property type="protein sequence ID" value="BAA16718"/>
    <property type="gene ID" value="BAA16718"/>
</dbReference>
<dbReference type="KEGG" id="syn:slr0252"/>
<dbReference type="eggNOG" id="COG2099">
    <property type="taxonomic scope" value="Bacteria"/>
</dbReference>
<dbReference type="InParanoid" id="P72711"/>
<dbReference type="PhylomeDB" id="P72711"/>
<dbReference type="UniPathway" id="UPA00148">
    <property type="reaction ID" value="UER00228"/>
</dbReference>
<dbReference type="Proteomes" id="UP000001425">
    <property type="component" value="Chromosome"/>
</dbReference>
<dbReference type="GO" id="GO:0016994">
    <property type="term" value="F:precorrin-6A reductase activity"/>
    <property type="evidence" value="ECO:0007669"/>
    <property type="project" value="InterPro"/>
</dbReference>
<dbReference type="GO" id="GO:0009236">
    <property type="term" value="P:cobalamin biosynthetic process"/>
    <property type="evidence" value="ECO:0007669"/>
    <property type="project" value="UniProtKB-UniPathway"/>
</dbReference>
<dbReference type="InterPro" id="IPR003723">
    <property type="entry name" value="Precorrin-6x_reduct"/>
</dbReference>
<dbReference type="NCBIfam" id="TIGR00715">
    <property type="entry name" value="precor6x_red"/>
    <property type="match status" value="1"/>
</dbReference>
<dbReference type="NCBIfam" id="NF005970">
    <property type="entry name" value="PRK08057.1-4"/>
    <property type="match status" value="1"/>
</dbReference>
<dbReference type="PANTHER" id="PTHR36925">
    <property type="entry name" value="COBALT-PRECORRIN-6A REDUCTASE"/>
    <property type="match status" value="1"/>
</dbReference>
<dbReference type="PANTHER" id="PTHR36925:SF1">
    <property type="entry name" value="COBALT-PRECORRIN-6A REDUCTASE"/>
    <property type="match status" value="1"/>
</dbReference>
<dbReference type="Pfam" id="PF02571">
    <property type="entry name" value="CbiJ"/>
    <property type="match status" value="1"/>
</dbReference>
<dbReference type="PROSITE" id="PS51014">
    <property type="entry name" value="COBK_CBIJ"/>
    <property type="match status" value="1"/>
</dbReference>
<proteinExistence type="inferred from homology"/>
<evidence type="ECO:0000250" key="1"/>
<evidence type="ECO:0000255" key="2">
    <source>
        <dbReference type="PROSITE-ProRule" id="PRU00356"/>
    </source>
</evidence>
<keyword id="KW-0169">Cobalamin biosynthesis</keyword>
<keyword id="KW-0520">NAD</keyword>
<keyword id="KW-0560">Oxidoreductase</keyword>
<keyword id="KW-1185">Reference proteome</keyword>
<name>CBIJ_SYNY3</name>
<accession>P72711</accession>
<feature type="chain" id="PRO_0000135916" description="Cobalt-precorrin-6A reductase">
    <location>
        <begin position="1"/>
        <end position="261"/>
    </location>
</feature>
<gene>
    <name type="primary">cbiJ</name>
    <name type="synonym">cobK</name>
    <name type="ordered locus">slr0252</name>
</gene>
<sequence>MVDSLATVWLIGGTVDSRAVAEGLIAQGINCLVTVTTSEAKHLYPIHQCLTVHVGALTPQEIPKFLKRHSIAVIVDASHPFAAQITTTVTAIAKEQQIPYIRFERPPLALGKNTLEVPDIQSLTRGKYQPYLRGKRVLLTVGARWLSHFSLLQDEAVLFARILPYPQALAQAIAAGFTSDRIIALRPPVAEPLEKALWQQWQIQGVVTKASGAQGGELVKQKVAEALGVNLIRIARPQTIPGQITDDLSQINQFCQRHLPS</sequence>
<reference key="1">
    <citation type="journal article" date="1996" name="DNA Res.">
        <title>Sequence analysis of the genome of the unicellular cyanobacterium Synechocystis sp. strain PCC6803. II. Sequence determination of the entire genome and assignment of potential protein-coding regions.</title>
        <authorList>
            <person name="Kaneko T."/>
            <person name="Sato S."/>
            <person name="Kotani H."/>
            <person name="Tanaka A."/>
            <person name="Asamizu E."/>
            <person name="Nakamura Y."/>
            <person name="Miyajima N."/>
            <person name="Hirosawa M."/>
            <person name="Sugiura M."/>
            <person name="Sasamoto S."/>
            <person name="Kimura T."/>
            <person name="Hosouchi T."/>
            <person name="Matsuno A."/>
            <person name="Muraki A."/>
            <person name="Nakazaki N."/>
            <person name="Naruo K."/>
            <person name="Okumura S."/>
            <person name="Shimpo S."/>
            <person name="Takeuchi C."/>
            <person name="Wada T."/>
            <person name="Watanabe A."/>
            <person name="Yamada M."/>
            <person name="Yasuda M."/>
            <person name="Tabata S."/>
        </authorList>
    </citation>
    <scope>NUCLEOTIDE SEQUENCE [LARGE SCALE GENOMIC DNA]</scope>
    <source>
        <strain>ATCC 27184 / PCC 6803 / Kazusa</strain>
    </source>
</reference>